<dbReference type="EC" id="3.2.2.27" evidence="1"/>
<dbReference type="EMBL" id="AJ938182">
    <property type="protein sequence ID" value="CAI80219.1"/>
    <property type="molecule type" value="Genomic_DNA"/>
</dbReference>
<dbReference type="RefSeq" id="WP_000455258.1">
    <property type="nucleotide sequence ID" value="NC_007622.1"/>
</dbReference>
<dbReference type="SMR" id="Q2YS83"/>
<dbReference type="KEGG" id="sab:SAB0531"/>
<dbReference type="HOGENOM" id="CLU_032162_3_1_9"/>
<dbReference type="GO" id="GO:0005737">
    <property type="term" value="C:cytoplasm"/>
    <property type="evidence" value="ECO:0007669"/>
    <property type="project" value="UniProtKB-SubCell"/>
</dbReference>
<dbReference type="GO" id="GO:0004844">
    <property type="term" value="F:uracil DNA N-glycosylase activity"/>
    <property type="evidence" value="ECO:0007669"/>
    <property type="project" value="UniProtKB-UniRule"/>
</dbReference>
<dbReference type="GO" id="GO:0097510">
    <property type="term" value="P:base-excision repair, AP site formation via deaminated base removal"/>
    <property type="evidence" value="ECO:0007669"/>
    <property type="project" value="TreeGrafter"/>
</dbReference>
<dbReference type="CDD" id="cd10027">
    <property type="entry name" value="UDG-F1-like"/>
    <property type="match status" value="1"/>
</dbReference>
<dbReference type="FunFam" id="3.40.470.10:FF:000001">
    <property type="entry name" value="Uracil-DNA glycosylase"/>
    <property type="match status" value="1"/>
</dbReference>
<dbReference type="Gene3D" id="3.40.470.10">
    <property type="entry name" value="Uracil-DNA glycosylase-like domain"/>
    <property type="match status" value="1"/>
</dbReference>
<dbReference type="HAMAP" id="MF_00148">
    <property type="entry name" value="UDG"/>
    <property type="match status" value="1"/>
</dbReference>
<dbReference type="InterPro" id="IPR002043">
    <property type="entry name" value="UDG_fam1"/>
</dbReference>
<dbReference type="InterPro" id="IPR018085">
    <property type="entry name" value="Ura-DNA_Glyclase_AS"/>
</dbReference>
<dbReference type="InterPro" id="IPR005122">
    <property type="entry name" value="Uracil-DNA_glycosylase-like"/>
</dbReference>
<dbReference type="InterPro" id="IPR036895">
    <property type="entry name" value="Uracil-DNA_glycosylase-like_sf"/>
</dbReference>
<dbReference type="NCBIfam" id="NF003588">
    <property type="entry name" value="PRK05254.1-1"/>
    <property type="match status" value="1"/>
</dbReference>
<dbReference type="NCBIfam" id="NF003589">
    <property type="entry name" value="PRK05254.1-2"/>
    <property type="match status" value="1"/>
</dbReference>
<dbReference type="NCBIfam" id="NF003591">
    <property type="entry name" value="PRK05254.1-4"/>
    <property type="match status" value="1"/>
</dbReference>
<dbReference type="NCBIfam" id="NF003592">
    <property type="entry name" value="PRK05254.1-5"/>
    <property type="match status" value="1"/>
</dbReference>
<dbReference type="NCBIfam" id="TIGR00628">
    <property type="entry name" value="ung"/>
    <property type="match status" value="1"/>
</dbReference>
<dbReference type="PANTHER" id="PTHR11264">
    <property type="entry name" value="URACIL-DNA GLYCOSYLASE"/>
    <property type="match status" value="1"/>
</dbReference>
<dbReference type="PANTHER" id="PTHR11264:SF0">
    <property type="entry name" value="URACIL-DNA GLYCOSYLASE"/>
    <property type="match status" value="1"/>
</dbReference>
<dbReference type="Pfam" id="PF03167">
    <property type="entry name" value="UDG"/>
    <property type="match status" value="1"/>
</dbReference>
<dbReference type="SMART" id="SM00986">
    <property type="entry name" value="UDG"/>
    <property type="match status" value="1"/>
</dbReference>
<dbReference type="SMART" id="SM00987">
    <property type="entry name" value="UreE_C"/>
    <property type="match status" value="1"/>
</dbReference>
<dbReference type="SUPFAM" id="SSF52141">
    <property type="entry name" value="Uracil-DNA glycosylase-like"/>
    <property type="match status" value="1"/>
</dbReference>
<dbReference type="PROSITE" id="PS00130">
    <property type="entry name" value="U_DNA_GLYCOSYLASE"/>
    <property type="match status" value="1"/>
</dbReference>
<protein>
    <recommendedName>
        <fullName evidence="1">Uracil-DNA glycosylase</fullName>
        <shortName evidence="1">UDG</shortName>
        <ecNumber evidence="1">3.2.2.27</ecNumber>
    </recommendedName>
</protein>
<keyword id="KW-0963">Cytoplasm</keyword>
<keyword id="KW-0227">DNA damage</keyword>
<keyword id="KW-0234">DNA repair</keyword>
<keyword id="KW-0378">Hydrolase</keyword>
<reference key="1">
    <citation type="journal article" date="2007" name="PLoS ONE">
        <title>Molecular correlates of host specialization in Staphylococcus aureus.</title>
        <authorList>
            <person name="Herron-Olson L."/>
            <person name="Fitzgerald J.R."/>
            <person name="Musser J.M."/>
            <person name="Kapur V."/>
        </authorList>
    </citation>
    <scope>NUCLEOTIDE SEQUENCE [LARGE SCALE GENOMIC DNA]</scope>
    <source>
        <strain>bovine RF122 / ET3-1</strain>
    </source>
</reference>
<gene>
    <name evidence="1" type="primary">ung</name>
    <name type="ordered locus">SAB0531</name>
</gene>
<proteinExistence type="inferred from homology"/>
<comment type="function">
    <text evidence="1">Excises uracil residues from the DNA which can arise as a result of misincorporation of dUMP residues by DNA polymerase or due to deamination of cytosine.</text>
</comment>
<comment type="catalytic activity">
    <reaction evidence="1">
        <text>Hydrolyzes single-stranded DNA or mismatched double-stranded DNA and polynucleotides, releasing free uracil.</text>
        <dbReference type="EC" id="3.2.2.27"/>
    </reaction>
</comment>
<comment type="subcellular location">
    <subcellularLocation>
        <location evidence="1">Cytoplasm</location>
    </subcellularLocation>
</comment>
<comment type="similarity">
    <text evidence="1">Belongs to the uracil-DNA glycosylase (UDG) superfamily. UNG family.</text>
</comment>
<name>UNG_STAAB</name>
<organism>
    <name type="scientific">Staphylococcus aureus (strain bovine RF122 / ET3-1)</name>
    <dbReference type="NCBI Taxonomy" id="273036"/>
    <lineage>
        <taxon>Bacteria</taxon>
        <taxon>Bacillati</taxon>
        <taxon>Bacillota</taxon>
        <taxon>Bacilli</taxon>
        <taxon>Bacillales</taxon>
        <taxon>Staphylococcaceae</taxon>
        <taxon>Staphylococcus</taxon>
    </lineage>
</organism>
<evidence type="ECO:0000255" key="1">
    <source>
        <dbReference type="HAMAP-Rule" id="MF_00148"/>
    </source>
</evidence>
<feature type="chain" id="PRO_1000009946" description="Uracil-DNA glycosylase">
    <location>
        <begin position="1"/>
        <end position="218"/>
    </location>
</feature>
<feature type="active site" description="Proton acceptor" evidence="1">
    <location>
        <position position="59"/>
    </location>
</feature>
<sequence>MEWSQIFHDITTKHDFKAMHDFLEKEYSTAIVYPDRENIYQAFDLTPFENIKVVILGQDPYHGPNQAHGLAFSVQPNAKFPPSLRNMYKELADDIGCVRQTPHLQDWAREGVLLLNTVLTVRQGEANSHRDIGWETFTDEIIKAVSDYKEHVVFILWGKPAQQKIKLIDTSKHCIIKSVHPSPLSAYRGFFGSKPYSKANTYLESVGKSPINWCESEA</sequence>
<accession>Q2YS83</accession>